<sequence>KRALQSEKRRQHNASRRSMTRTYLKKVIAAIASGDKAAATAAFAVAQPIMDRMATKGLIHKNKAARHKSRLS</sequence>
<gene>
    <name type="primary">rpsT</name>
</gene>
<name>RS20_AERSO</name>
<proteinExistence type="inferred from homology"/>
<organism>
    <name type="scientific">Aeromonas sobria</name>
    <dbReference type="NCBI Taxonomy" id="646"/>
    <lineage>
        <taxon>Bacteria</taxon>
        <taxon>Pseudomonadati</taxon>
        <taxon>Pseudomonadota</taxon>
        <taxon>Gammaproteobacteria</taxon>
        <taxon>Aeromonadales</taxon>
        <taxon>Aeromonadaceae</taxon>
        <taxon>Aeromonas</taxon>
    </lineage>
</organism>
<reference key="1">
    <citation type="journal article" date="1995" name="Biochim. Biophys. Acta">
        <title>Conserved amino acid residues in the primary structure of ribosomal protein S20 from selected Gram-negative bacteria.</title>
        <authorList>
            <person name="Nemec A."/>
            <person name="Haywood-Farmer A."/>
            <person name="Mackie G.A."/>
        </authorList>
    </citation>
    <scope>NUCLEOTIDE SEQUENCE [GENOMIC DNA]</scope>
</reference>
<protein>
    <recommendedName>
        <fullName evidence="2">Small ribosomal subunit protein bS20</fullName>
    </recommendedName>
    <alternativeName>
        <fullName>30S ribosomal protein S20</fullName>
    </alternativeName>
</protein>
<dbReference type="EMBL" id="U20494">
    <property type="protein sequence ID" value="AAA86997.1"/>
    <property type="molecule type" value="Genomic_DNA"/>
</dbReference>
<dbReference type="PIR" id="S58763">
    <property type="entry name" value="S58763"/>
</dbReference>
<dbReference type="SMR" id="P45788"/>
<dbReference type="STRING" id="646.BJD16_06965"/>
<dbReference type="GO" id="GO:0005829">
    <property type="term" value="C:cytosol"/>
    <property type="evidence" value="ECO:0007669"/>
    <property type="project" value="TreeGrafter"/>
</dbReference>
<dbReference type="GO" id="GO:0015935">
    <property type="term" value="C:small ribosomal subunit"/>
    <property type="evidence" value="ECO:0007669"/>
    <property type="project" value="TreeGrafter"/>
</dbReference>
<dbReference type="GO" id="GO:0070181">
    <property type="term" value="F:small ribosomal subunit rRNA binding"/>
    <property type="evidence" value="ECO:0007669"/>
    <property type="project" value="TreeGrafter"/>
</dbReference>
<dbReference type="GO" id="GO:0003735">
    <property type="term" value="F:structural constituent of ribosome"/>
    <property type="evidence" value="ECO:0007669"/>
    <property type="project" value="InterPro"/>
</dbReference>
<dbReference type="GO" id="GO:0006412">
    <property type="term" value="P:translation"/>
    <property type="evidence" value="ECO:0007669"/>
    <property type="project" value="InterPro"/>
</dbReference>
<dbReference type="FunFam" id="1.20.58.110:FF:000001">
    <property type="entry name" value="30S ribosomal protein S20"/>
    <property type="match status" value="1"/>
</dbReference>
<dbReference type="Gene3D" id="1.20.58.110">
    <property type="entry name" value="Ribosomal protein S20"/>
    <property type="match status" value="1"/>
</dbReference>
<dbReference type="InterPro" id="IPR002583">
    <property type="entry name" value="Ribosomal_bS20"/>
</dbReference>
<dbReference type="InterPro" id="IPR036510">
    <property type="entry name" value="Ribosomal_bS20_sf"/>
</dbReference>
<dbReference type="NCBIfam" id="TIGR00029">
    <property type="entry name" value="S20"/>
    <property type="match status" value="1"/>
</dbReference>
<dbReference type="PANTHER" id="PTHR33398">
    <property type="entry name" value="30S RIBOSOMAL PROTEIN S20"/>
    <property type="match status" value="1"/>
</dbReference>
<dbReference type="PANTHER" id="PTHR33398:SF1">
    <property type="entry name" value="SMALL RIBOSOMAL SUBUNIT PROTEIN BS20C"/>
    <property type="match status" value="1"/>
</dbReference>
<dbReference type="Pfam" id="PF01649">
    <property type="entry name" value="Ribosomal_S20p"/>
    <property type="match status" value="1"/>
</dbReference>
<dbReference type="SUPFAM" id="SSF46992">
    <property type="entry name" value="Ribosomal protein S20"/>
    <property type="match status" value="1"/>
</dbReference>
<accession>P45788</accession>
<keyword id="KW-0687">Ribonucleoprotein</keyword>
<keyword id="KW-0689">Ribosomal protein</keyword>
<keyword id="KW-0694">RNA-binding</keyword>
<keyword id="KW-0699">rRNA-binding</keyword>
<comment type="function">
    <text evidence="1">Binds directly to 16S ribosomal RNA.</text>
</comment>
<comment type="similarity">
    <text evidence="2">Belongs to the bacterial ribosomal protein bS20 family.</text>
</comment>
<feature type="chain" id="PRO_0000167907" description="Small ribosomal subunit protein bS20">
    <location>
        <begin position="1" status="less than"/>
        <end position="72" status="greater than"/>
    </location>
</feature>
<feature type="non-terminal residue">
    <location>
        <position position="1"/>
    </location>
</feature>
<feature type="non-terminal residue">
    <location>
        <position position="72"/>
    </location>
</feature>
<evidence type="ECO:0000250" key="1"/>
<evidence type="ECO:0000305" key="2"/>